<proteinExistence type="evidence at protein level"/>
<dbReference type="EMBL" id="AJ012754">
    <property type="protein sequence ID" value="CAA10170.1"/>
    <property type="molecule type" value="mRNA"/>
</dbReference>
<dbReference type="EMBL" id="AJ130943">
    <property type="protein sequence ID" value="CAA10255.1"/>
    <property type="molecule type" value="mRNA"/>
</dbReference>
<dbReference type="EMBL" id="AK150950">
    <property type="protein sequence ID" value="BAE29983.1"/>
    <property type="molecule type" value="mRNA"/>
</dbReference>
<dbReference type="EMBL" id="AK151718">
    <property type="protein sequence ID" value="BAE30637.1"/>
    <property type="molecule type" value="mRNA"/>
</dbReference>
<dbReference type="EMBL" id="AK152637">
    <property type="protein sequence ID" value="BAE31379.1"/>
    <property type="molecule type" value="mRNA"/>
</dbReference>
<dbReference type="EMBL" id="AK170851">
    <property type="protein sequence ID" value="BAE42073.1"/>
    <property type="molecule type" value="mRNA"/>
</dbReference>
<dbReference type="EMBL" id="BC014709">
    <property type="protein sequence ID" value="AAH14709.1"/>
    <property type="molecule type" value="mRNA"/>
</dbReference>
<dbReference type="CCDS" id="CCDS27087.1"/>
<dbReference type="RefSeq" id="NP_001240608.1">
    <property type="nucleotide sequence ID" value="NM_001253679.1"/>
</dbReference>
<dbReference type="RefSeq" id="NP_001240609.1">
    <property type="nucleotide sequence ID" value="NM_001253680.1"/>
</dbReference>
<dbReference type="RefSeq" id="NP_001366426.1">
    <property type="nucleotide sequence ID" value="NM_001379497.1"/>
</dbReference>
<dbReference type="RefSeq" id="NP_001366427.1">
    <property type="nucleotide sequence ID" value="NM_001379498.1"/>
</dbReference>
<dbReference type="RefSeq" id="NP_001366428.1">
    <property type="nucleotide sequence ID" value="NM_001379499.1"/>
</dbReference>
<dbReference type="RefSeq" id="NP_001411520.1">
    <property type="nucleotide sequence ID" value="NM_001424591.1"/>
</dbReference>
<dbReference type="RefSeq" id="NP_035535.2">
    <property type="nucleotide sequence ID" value="NM_011405.4"/>
</dbReference>
<dbReference type="RefSeq" id="XP_006518811.1">
    <property type="nucleotide sequence ID" value="XM_006518748.2"/>
</dbReference>
<dbReference type="RefSeq" id="XP_006518814.1">
    <property type="nucleotide sequence ID" value="XM_006518751.3"/>
</dbReference>
<dbReference type="RefSeq" id="XP_006518815.1">
    <property type="nucleotide sequence ID" value="XM_006518752.1"/>
</dbReference>
<dbReference type="RefSeq" id="XP_006518816.1">
    <property type="nucleotide sequence ID" value="XM_006518753.1"/>
</dbReference>
<dbReference type="RefSeq" id="XP_006518817.1">
    <property type="nucleotide sequence ID" value="XM_006518754.3"/>
</dbReference>
<dbReference type="RefSeq" id="XP_006518818.1">
    <property type="nucleotide sequence ID" value="XM_006518755.5"/>
</dbReference>
<dbReference type="RefSeq" id="XP_036014421.1">
    <property type="nucleotide sequence ID" value="XM_036158528.1"/>
</dbReference>
<dbReference type="SMR" id="Q9Z1K8"/>
<dbReference type="BioGRID" id="203319">
    <property type="interactions" value="1"/>
</dbReference>
<dbReference type="FunCoup" id="Q9Z1K8">
    <property type="interactions" value="162"/>
</dbReference>
<dbReference type="STRING" id="10090.ENSMUSP00000143743"/>
<dbReference type="GlyCosmos" id="Q9Z1K8">
    <property type="glycosylation" value="2 sites, No reported glycans"/>
</dbReference>
<dbReference type="GlyGen" id="Q9Z1K8">
    <property type="glycosylation" value="2 sites"/>
</dbReference>
<dbReference type="iPTMnet" id="Q9Z1K8"/>
<dbReference type="PhosphoSitePlus" id="Q9Z1K8"/>
<dbReference type="jPOST" id="Q9Z1K8"/>
<dbReference type="PaxDb" id="10090-ENSMUSP00000000984"/>
<dbReference type="PeptideAtlas" id="Q9Z1K8"/>
<dbReference type="ProteomicsDB" id="275226"/>
<dbReference type="Antibodypedia" id="22283">
    <property type="antibodies" value="78 antibodies from 19 providers"/>
</dbReference>
<dbReference type="DNASU" id="20540"/>
<dbReference type="Ensembl" id="ENSMUST00000000984.9">
    <property type="protein sequence ID" value="ENSMUSP00000000984.5"/>
    <property type="gene ID" value="ENSMUSG00000000958.11"/>
</dbReference>
<dbReference type="Ensembl" id="ENSMUST00000195970.5">
    <property type="protein sequence ID" value="ENSMUSP00000143091.2"/>
    <property type="gene ID" value="ENSMUSG00000000958.11"/>
</dbReference>
<dbReference type="Ensembl" id="ENSMUST00000197440.5">
    <property type="protein sequence ID" value="ENSMUSP00000143743.2"/>
    <property type="gene ID" value="ENSMUSG00000000958.11"/>
</dbReference>
<dbReference type="Ensembl" id="ENSMUST00000226753.2">
    <property type="protein sequence ID" value="ENSMUSP00000154533.2"/>
    <property type="gene ID" value="ENSMUSG00000000958.11"/>
</dbReference>
<dbReference type="GeneID" id="20540"/>
<dbReference type="KEGG" id="mmu:20540"/>
<dbReference type="UCSC" id="uc007tvv.2">
    <property type="organism name" value="mouse"/>
</dbReference>
<dbReference type="AGR" id="MGI:1337120"/>
<dbReference type="CTD" id="9056"/>
<dbReference type="MGI" id="MGI:1337120">
    <property type="gene designation" value="Slc7a7"/>
</dbReference>
<dbReference type="VEuPathDB" id="HostDB:ENSMUSG00000000958"/>
<dbReference type="eggNOG" id="KOG1287">
    <property type="taxonomic scope" value="Eukaryota"/>
</dbReference>
<dbReference type="GeneTree" id="ENSGT00940000160134"/>
<dbReference type="HOGENOM" id="CLU_007946_3_0_1"/>
<dbReference type="InParanoid" id="Q9Z1K8"/>
<dbReference type="OMA" id="AIVFGKY"/>
<dbReference type="OrthoDB" id="10062876at2759"/>
<dbReference type="PhylomeDB" id="Q9Z1K8"/>
<dbReference type="TreeFam" id="TF313355"/>
<dbReference type="Reactome" id="R-MMU-210991">
    <property type="pathway name" value="Basigin interactions"/>
</dbReference>
<dbReference type="Reactome" id="R-MMU-352230">
    <property type="pathway name" value="Amino acid transport across the plasma membrane"/>
</dbReference>
<dbReference type="SABIO-RK" id="Q9Z1K8"/>
<dbReference type="BioGRID-ORCS" id="20540">
    <property type="hits" value="2 hits in 76 CRISPR screens"/>
</dbReference>
<dbReference type="PRO" id="PR:Q9Z1K8"/>
<dbReference type="Proteomes" id="UP000000589">
    <property type="component" value="Chromosome 14"/>
</dbReference>
<dbReference type="RNAct" id="Q9Z1K8">
    <property type="molecule type" value="protein"/>
</dbReference>
<dbReference type="Bgee" id="ENSMUSG00000000958">
    <property type="expression patterns" value="Expressed in small intestine Peyer's patch and 135 other cell types or tissues"/>
</dbReference>
<dbReference type="ExpressionAtlas" id="Q9Z1K8">
    <property type="expression patterns" value="baseline and differential"/>
</dbReference>
<dbReference type="GO" id="GO:0016323">
    <property type="term" value="C:basolateral plasma membrane"/>
    <property type="evidence" value="ECO:0007669"/>
    <property type="project" value="UniProtKB-SubCell"/>
</dbReference>
<dbReference type="GO" id="GO:0015174">
    <property type="term" value="F:basic amino acid transmembrane transporter activity"/>
    <property type="evidence" value="ECO:0000315"/>
    <property type="project" value="MGI"/>
</dbReference>
<dbReference type="GO" id="GO:0061459">
    <property type="term" value="F:L-arginine transmembrane transporter activity"/>
    <property type="evidence" value="ECO:0000250"/>
    <property type="project" value="UniProtKB"/>
</dbReference>
<dbReference type="GO" id="GO:1903826">
    <property type="term" value="P:L-arginine transmembrane transport"/>
    <property type="evidence" value="ECO:0000250"/>
    <property type="project" value="UniProtKB"/>
</dbReference>
<dbReference type="GO" id="GO:0015820">
    <property type="term" value="P:L-leucine transport"/>
    <property type="evidence" value="ECO:0000250"/>
    <property type="project" value="UniProtKB"/>
</dbReference>
<dbReference type="GO" id="GO:0000821">
    <property type="term" value="P:regulation of arginine metabolic process"/>
    <property type="evidence" value="ECO:0000315"/>
    <property type="project" value="MGI"/>
</dbReference>
<dbReference type="FunFam" id="1.20.1740.10:FF:000003">
    <property type="entry name" value="Y+L amino acid transporter 1 isoform X1"/>
    <property type="match status" value="1"/>
</dbReference>
<dbReference type="Gene3D" id="1.20.1740.10">
    <property type="entry name" value="Amino acid/polyamine transporter I"/>
    <property type="match status" value="1"/>
</dbReference>
<dbReference type="InterPro" id="IPR002293">
    <property type="entry name" value="AA/rel_permease1"/>
</dbReference>
<dbReference type="InterPro" id="IPR050598">
    <property type="entry name" value="AminoAcid_Transporter"/>
</dbReference>
<dbReference type="PANTHER" id="PTHR11785">
    <property type="entry name" value="AMINO ACID TRANSPORTER"/>
    <property type="match status" value="1"/>
</dbReference>
<dbReference type="PANTHER" id="PTHR11785:SF303">
    <property type="entry name" value="Y+L AMINO ACID TRANSPORTER 1"/>
    <property type="match status" value="1"/>
</dbReference>
<dbReference type="Pfam" id="PF13520">
    <property type="entry name" value="AA_permease_2"/>
    <property type="match status" value="1"/>
</dbReference>
<dbReference type="PIRSF" id="PIRSF006060">
    <property type="entry name" value="AA_transporter"/>
    <property type="match status" value="1"/>
</dbReference>
<protein>
    <recommendedName>
        <fullName evidence="7">Y+L amino acid transporter 1</fullName>
    </recommendedName>
    <alternativeName>
        <fullName>Solute carrier family 7 member 7</fullName>
    </alternativeName>
    <alternativeName>
        <fullName>y(+)L-type amino acid transporter 1</fullName>
        <shortName>Y+LAT1</shortName>
        <shortName>y+LAT-1</shortName>
    </alternativeName>
</protein>
<feature type="chain" id="PRO_0000304935" description="Y+L amino acid transporter 1">
    <location>
        <begin position="1"/>
        <end position="510"/>
    </location>
</feature>
<feature type="transmembrane region" description="Helical" evidence="3">
    <location>
        <begin position="38"/>
        <end position="58"/>
    </location>
</feature>
<feature type="transmembrane region" description="Helical" evidence="3">
    <location>
        <begin position="70"/>
        <end position="90"/>
    </location>
</feature>
<feature type="transmembrane region" description="Helical" evidence="3">
    <location>
        <begin position="108"/>
        <end position="128"/>
    </location>
</feature>
<feature type="transmembrane region" description="Helical" evidence="3">
    <location>
        <begin position="134"/>
        <end position="154"/>
    </location>
</feature>
<feature type="transmembrane region" description="Helical" evidence="3">
    <location>
        <begin position="161"/>
        <end position="181"/>
    </location>
</feature>
<feature type="transmembrane region" description="Helical" evidence="3">
    <location>
        <begin position="187"/>
        <end position="207"/>
    </location>
</feature>
<feature type="transmembrane region" description="Helical" evidence="3">
    <location>
        <begin position="223"/>
        <end position="243"/>
    </location>
</feature>
<feature type="transmembrane region" description="Helical" evidence="3">
    <location>
        <begin position="260"/>
        <end position="280"/>
    </location>
</feature>
<feature type="transmembrane region" description="Helical" evidence="3">
    <location>
        <begin position="305"/>
        <end position="325"/>
    </location>
</feature>
<feature type="transmembrane region" description="Helical" evidence="3">
    <location>
        <begin position="384"/>
        <end position="404"/>
    </location>
</feature>
<feature type="transmembrane region" description="Helical" evidence="3">
    <location>
        <begin position="417"/>
        <end position="437"/>
    </location>
</feature>
<feature type="transmembrane region" description="Helical" evidence="3">
    <location>
        <begin position="442"/>
        <end position="462"/>
    </location>
</feature>
<feature type="modified residue" description="Phosphoserine" evidence="9 10 11">
    <location>
        <position position="19"/>
    </location>
</feature>
<feature type="modified residue" description="Phosphoserine" evidence="11">
    <location>
        <position position="26"/>
    </location>
</feature>
<feature type="glycosylation site" description="N-linked (GlcNAc...) asparagine" evidence="3">
    <location>
        <position position="3"/>
    </location>
</feature>
<feature type="glycosylation site" description="N-linked (GlcNAc...) asparagine" evidence="3">
    <location>
        <position position="326"/>
    </location>
</feature>
<feature type="sequence variant" evidence="6">
    <original>S</original>
    <variation>T</variation>
    <location>
        <position position="4"/>
    </location>
</feature>
<sequence length="510" mass="55677">MVNSTKYEVAAQHEADDGSALGDGASPVAEQVKLKKEISLLNGVCLIVGNMIGSGIFVSPKGVLMYSASFGLSLVIWAVGGIFSVFGALCYAELGTTIKKSGASYAYILEAFGGFLAFIRLWTSLLIIEPTSQAVIAITFANYMVQPLFPSCGAPYAAGRLLAAACICLLTFINCAYVKWGTLVQDIFTYAKVLALIAVIIAGIVRLGQGATANFENSFEGSSFAMGDIALALYSALFSYSGWDTLNYVTEEIRNPERNLPLSIGISMPIVTIIYLLTNVAYYSVLDIKEILASDAVAVTFADQIFGVFNWIIPVAVAFSCFGGLNASIVAASRLLFVGSREGHLPDAICMVHVERFTPVPSLLFNGVLSLVYLCVEDIFQLINYYSFSYWFFVGLSIVGQLYLRWKDPDRPRPLKLSLFFPIIFCLCTIFLVAVPLYSDTINSLIGIGIALSGLPFYFFIIRVPEHKRPLFLRRIVASITRYLQILCMSVAAEMDLEDGELSKQDPKSK</sequence>
<organism>
    <name type="scientific">Mus musculus</name>
    <name type="common">Mouse</name>
    <dbReference type="NCBI Taxonomy" id="10090"/>
    <lineage>
        <taxon>Eukaryota</taxon>
        <taxon>Metazoa</taxon>
        <taxon>Chordata</taxon>
        <taxon>Craniata</taxon>
        <taxon>Vertebrata</taxon>
        <taxon>Euteleostomi</taxon>
        <taxon>Mammalia</taxon>
        <taxon>Eutheria</taxon>
        <taxon>Euarchontoglires</taxon>
        <taxon>Glires</taxon>
        <taxon>Rodentia</taxon>
        <taxon>Myomorpha</taxon>
        <taxon>Muroidea</taxon>
        <taxon>Muridae</taxon>
        <taxon>Murinae</taxon>
        <taxon>Mus</taxon>
        <taxon>Mus</taxon>
    </lineage>
</organism>
<keyword id="KW-0029">Amino-acid transport</keyword>
<keyword id="KW-1003">Cell membrane</keyword>
<keyword id="KW-1015">Disulfide bond</keyword>
<keyword id="KW-0325">Glycoprotein</keyword>
<keyword id="KW-0472">Membrane</keyword>
<keyword id="KW-0597">Phosphoprotein</keyword>
<keyword id="KW-1185">Reference proteome</keyword>
<keyword id="KW-0812">Transmembrane</keyword>
<keyword id="KW-1133">Transmembrane helix</keyword>
<keyword id="KW-0813">Transport</keyword>
<accession>Q9Z1K8</accession>
<accession>Q9QWS1</accession>
<comment type="function">
    <text evidence="1 2 6">Heterodimer with SLC3A2, that functions as an antiporter which operates as an efflux route by exporting cationic amino acids from inside the cells in exchange with neutral amino acids plus sodium ions and may participate in nitric oxide synthesis via the transport of L-arginine (PubMed:9878049). Also mediates L-arginine transport in non-polarized cells, such as monocytes, and is essential for the correct function of these cells (By similarity). The transport mechanism is electroneutral and operates with a stoichiometry of 1:1 (By similarity). In vitro, Na(+) and Li(+), but also H(+), are cotransported with the neutral amino acids (By similarity).</text>
</comment>
<comment type="catalytic activity">
    <reaction evidence="1">
        <text>L-leucine(out) + L-arginine(in) + Na(+)(out) = L-leucine(in) + L-arginine(out) + Na(+)(in)</text>
        <dbReference type="Rhea" id="RHEA:70831"/>
        <dbReference type="ChEBI" id="CHEBI:29101"/>
        <dbReference type="ChEBI" id="CHEBI:32682"/>
        <dbReference type="ChEBI" id="CHEBI:57427"/>
    </reaction>
</comment>
<comment type="catalytic activity">
    <reaction evidence="1">
        <text>L-leucine(out) + L-lysine(in) + Na(+)(out) = L-leucine(in) + L-lysine(out) + Na(+)(in)</text>
        <dbReference type="Rhea" id="RHEA:74971"/>
        <dbReference type="ChEBI" id="CHEBI:29101"/>
        <dbReference type="ChEBI" id="CHEBI:32551"/>
        <dbReference type="ChEBI" id="CHEBI:57427"/>
    </reaction>
</comment>
<comment type="catalytic activity">
    <reaction evidence="1">
        <text>L-leucine(out) + L-ornithine(in) + Na(+)(out) = L-leucine(in) + L-ornithine(out) + Na(+)(in)</text>
        <dbReference type="Rhea" id="RHEA:74963"/>
        <dbReference type="ChEBI" id="CHEBI:29101"/>
        <dbReference type="ChEBI" id="CHEBI:46911"/>
        <dbReference type="ChEBI" id="CHEBI:57427"/>
    </reaction>
</comment>
<comment type="biophysicochemical properties">
    <kinetics>
        <KM evidence="6">91.5 uM for L-arginine (in the absence of NaCl)</KM>
        <KM evidence="6">340.8 uM for L-arginine (in the presence of 0.1 M NaCl)</KM>
        <KM evidence="6">21.7 uM for L-leucine (in the presence of 0.1 M NaCl)</KM>
        <KM evidence="6">1.36 mM for L-alanine (in the presence of 0.1 M NaCl)</KM>
        <KM evidence="6">47.9 uM for L-leucine (in the presence of 0.1 M LiCl)</KM>
    </kinetics>
</comment>
<comment type="subunit">
    <text evidence="6">Disulfide-linked heterodimer with the amino acid transport protein SLC3A2/4F2hc.</text>
</comment>
<comment type="subcellular location">
    <subcellularLocation>
        <location evidence="2">Basolateral cell membrane</location>
        <topology evidence="3">Multi-pass membrane protein</topology>
    </subcellularLocation>
</comment>
<comment type="tissue specificity">
    <text evidence="6">Strongly expressed in kidney and intestine. Weaker expression observed in epididymis, testis, ovary, thyroid pancreas, sub-gland and liver.</text>
</comment>
<comment type="disruption phenotype">
    <text evidence="4 5">A mouse model for human lysinuric protein intolerance (LPI), where homozygous knockout mice for Slc7a7 gene are born at a frequency lower than the expected Mendelian ratio (PubMed:17376816). Only two homozygous mice survived, whereas 16 of them died within 24 hours of birth (PubMed:17376816). Growth retardation is an ongoing feature of the two surviving mice kept on a low-protein diet with citrulline supplementation. After a planned withdrawal of the special diet both mice show an acute metabolic derangement, identical to that found in human LPI, leading to death of both animals after severe hyperammonemic neurological symptoms (PubMed:17376816). Tamoxifen-inducible Slc7a7 homozygous knockout mice model resembles the human LPI phenotype, including malabsorption and impaired reabsorption of cationic amino acid (CAA), hypoargininemia and hyperammonemia. Mice also develops pulmonar alveolar proteinosis (PAP) and neurological impairment (PubMed:31653080).</text>
</comment>
<comment type="similarity">
    <text evidence="7">Belongs to the amino acid-polyamine-organocation (APC) superfamily. L-type amino acid transporter (LAT) (TC 2.A.3.8) family.</text>
</comment>
<name>YLAT1_MOUSE</name>
<reference key="1">
    <citation type="journal article" date="1999" name="EMBO J.">
        <title>Amino acid transport of y+L-type by heterodimers of 4F2hc/CD98 and members of the glycoprotein-associated amino acid transporter family.</title>
        <authorList>
            <person name="Pfeiffer R."/>
            <person name="Rossier G."/>
            <person name="Spindler B."/>
            <person name="Meier C."/>
            <person name="Kuehn L.C."/>
            <person name="Verrey F."/>
        </authorList>
    </citation>
    <scope>NUCLEOTIDE SEQUENCE [MRNA]</scope>
    <scope>FUNCTION</scope>
    <scope>BIOPHYSICOCHEMICAL PROPERTIES</scope>
    <scope>SUBUNIT</scope>
    <scope>TISSUE SPECIFICITY</scope>
    <scope>VARIANT THR-4</scope>
    <source>
        <strain>BALB/cJ</strain>
        <strain>NIH Swiss</strain>
        <tissue>Heart</tissue>
        <tissue>Kidney</tissue>
    </source>
</reference>
<reference key="2">
    <citation type="journal article" date="2005" name="Science">
        <title>The transcriptional landscape of the mammalian genome.</title>
        <authorList>
            <person name="Carninci P."/>
            <person name="Kasukawa T."/>
            <person name="Katayama S."/>
            <person name="Gough J."/>
            <person name="Frith M.C."/>
            <person name="Maeda N."/>
            <person name="Oyama R."/>
            <person name="Ravasi T."/>
            <person name="Lenhard B."/>
            <person name="Wells C."/>
            <person name="Kodzius R."/>
            <person name="Shimokawa K."/>
            <person name="Bajic V.B."/>
            <person name="Brenner S.E."/>
            <person name="Batalov S."/>
            <person name="Forrest A.R."/>
            <person name="Zavolan M."/>
            <person name="Davis M.J."/>
            <person name="Wilming L.G."/>
            <person name="Aidinis V."/>
            <person name="Allen J.E."/>
            <person name="Ambesi-Impiombato A."/>
            <person name="Apweiler R."/>
            <person name="Aturaliya R.N."/>
            <person name="Bailey T.L."/>
            <person name="Bansal M."/>
            <person name="Baxter L."/>
            <person name="Beisel K.W."/>
            <person name="Bersano T."/>
            <person name="Bono H."/>
            <person name="Chalk A.M."/>
            <person name="Chiu K.P."/>
            <person name="Choudhary V."/>
            <person name="Christoffels A."/>
            <person name="Clutterbuck D.R."/>
            <person name="Crowe M.L."/>
            <person name="Dalla E."/>
            <person name="Dalrymple B.P."/>
            <person name="de Bono B."/>
            <person name="Della Gatta G."/>
            <person name="di Bernardo D."/>
            <person name="Down T."/>
            <person name="Engstrom P."/>
            <person name="Fagiolini M."/>
            <person name="Faulkner G."/>
            <person name="Fletcher C.F."/>
            <person name="Fukushima T."/>
            <person name="Furuno M."/>
            <person name="Futaki S."/>
            <person name="Gariboldi M."/>
            <person name="Georgii-Hemming P."/>
            <person name="Gingeras T.R."/>
            <person name="Gojobori T."/>
            <person name="Green R.E."/>
            <person name="Gustincich S."/>
            <person name="Harbers M."/>
            <person name="Hayashi Y."/>
            <person name="Hensch T.K."/>
            <person name="Hirokawa N."/>
            <person name="Hill D."/>
            <person name="Huminiecki L."/>
            <person name="Iacono M."/>
            <person name="Ikeo K."/>
            <person name="Iwama A."/>
            <person name="Ishikawa T."/>
            <person name="Jakt M."/>
            <person name="Kanapin A."/>
            <person name="Katoh M."/>
            <person name="Kawasawa Y."/>
            <person name="Kelso J."/>
            <person name="Kitamura H."/>
            <person name="Kitano H."/>
            <person name="Kollias G."/>
            <person name="Krishnan S.P."/>
            <person name="Kruger A."/>
            <person name="Kummerfeld S.K."/>
            <person name="Kurochkin I.V."/>
            <person name="Lareau L.F."/>
            <person name="Lazarevic D."/>
            <person name="Lipovich L."/>
            <person name="Liu J."/>
            <person name="Liuni S."/>
            <person name="McWilliam S."/>
            <person name="Madan Babu M."/>
            <person name="Madera M."/>
            <person name="Marchionni L."/>
            <person name="Matsuda H."/>
            <person name="Matsuzawa S."/>
            <person name="Miki H."/>
            <person name="Mignone F."/>
            <person name="Miyake S."/>
            <person name="Morris K."/>
            <person name="Mottagui-Tabar S."/>
            <person name="Mulder N."/>
            <person name="Nakano N."/>
            <person name="Nakauchi H."/>
            <person name="Ng P."/>
            <person name="Nilsson R."/>
            <person name="Nishiguchi S."/>
            <person name="Nishikawa S."/>
            <person name="Nori F."/>
            <person name="Ohara O."/>
            <person name="Okazaki Y."/>
            <person name="Orlando V."/>
            <person name="Pang K.C."/>
            <person name="Pavan W.J."/>
            <person name="Pavesi G."/>
            <person name="Pesole G."/>
            <person name="Petrovsky N."/>
            <person name="Piazza S."/>
            <person name="Reed J."/>
            <person name="Reid J.F."/>
            <person name="Ring B.Z."/>
            <person name="Ringwald M."/>
            <person name="Rost B."/>
            <person name="Ruan Y."/>
            <person name="Salzberg S.L."/>
            <person name="Sandelin A."/>
            <person name="Schneider C."/>
            <person name="Schoenbach C."/>
            <person name="Sekiguchi K."/>
            <person name="Semple C.A."/>
            <person name="Seno S."/>
            <person name="Sessa L."/>
            <person name="Sheng Y."/>
            <person name="Shibata Y."/>
            <person name="Shimada H."/>
            <person name="Shimada K."/>
            <person name="Silva D."/>
            <person name="Sinclair B."/>
            <person name="Sperling S."/>
            <person name="Stupka E."/>
            <person name="Sugiura K."/>
            <person name="Sultana R."/>
            <person name="Takenaka Y."/>
            <person name="Taki K."/>
            <person name="Tammoja K."/>
            <person name="Tan S.L."/>
            <person name="Tang S."/>
            <person name="Taylor M.S."/>
            <person name="Tegner J."/>
            <person name="Teichmann S.A."/>
            <person name="Ueda H.R."/>
            <person name="van Nimwegen E."/>
            <person name="Verardo R."/>
            <person name="Wei C.L."/>
            <person name="Yagi K."/>
            <person name="Yamanishi H."/>
            <person name="Zabarovsky E."/>
            <person name="Zhu S."/>
            <person name="Zimmer A."/>
            <person name="Hide W."/>
            <person name="Bult C."/>
            <person name="Grimmond S.M."/>
            <person name="Teasdale R.D."/>
            <person name="Liu E.T."/>
            <person name="Brusic V."/>
            <person name="Quackenbush J."/>
            <person name="Wahlestedt C."/>
            <person name="Mattick J.S."/>
            <person name="Hume D.A."/>
            <person name="Kai C."/>
            <person name="Sasaki D."/>
            <person name="Tomaru Y."/>
            <person name="Fukuda S."/>
            <person name="Kanamori-Katayama M."/>
            <person name="Suzuki M."/>
            <person name="Aoki J."/>
            <person name="Arakawa T."/>
            <person name="Iida J."/>
            <person name="Imamura K."/>
            <person name="Itoh M."/>
            <person name="Kato T."/>
            <person name="Kawaji H."/>
            <person name="Kawagashira N."/>
            <person name="Kawashima T."/>
            <person name="Kojima M."/>
            <person name="Kondo S."/>
            <person name="Konno H."/>
            <person name="Nakano K."/>
            <person name="Ninomiya N."/>
            <person name="Nishio T."/>
            <person name="Okada M."/>
            <person name="Plessy C."/>
            <person name="Shibata K."/>
            <person name="Shiraki T."/>
            <person name="Suzuki S."/>
            <person name="Tagami M."/>
            <person name="Waki K."/>
            <person name="Watahiki A."/>
            <person name="Okamura-Oho Y."/>
            <person name="Suzuki H."/>
            <person name="Kawai J."/>
            <person name="Hayashizaki Y."/>
        </authorList>
    </citation>
    <scope>NUCLEOTIDE SEQUENCE [LARGE SCALE MRNA]</scope>
    <source>
        <strain>C57BL/6J</strain>
        <strain>NOD</strain>
        <tissue>Bone marrow</tissue>
    </source>
</reference>
<reference key="3">
    <citation type="journal article" date="2004" name="Genome Res.">
        <title>The status, quality, and expansion of the NIH full-length cDNA project: the Mammalian Gene Collection (MGC).</title>
        <authorList>
            <consortium name="The MGC Project Team"/>
        </authorList>
    </citation>
    <scope>NUCLEOTIDE SEQUENCE [LARGE SCALE MRNA]</scope>
    <source>
        <strain>FVB/N</strain>
        <tissue>Mammary tumor</tissue>
    </source>
</reference>
<reference key="4">
    <citation type="journal article" date="2007" name="Am. J. Physiol.">
        <title>Slc7a7 disruption causes fetal growth retardation by downregulating Igf1 in the mouse model of lysinuric protein intolerance.</title>
        <authorList>
            <person name="Sperandeo M.P."/>
            <person name="Annunziata P."/>
            <person name="Bozzato A."/>
            <person name="Piccolo P."/>
            <person name="Maiuri L."/>
            <person name="D'Armiento M."/>
            <person name="Ballabio A."/>
            <person name="Corso G."/>
            <person name="Andria G."/>
            <person name="Borsani G."/>
            <person name="Sebastio G."/>
        </authorList>
    </citation>
    <scope>DISRUPTION PHENOTYPE</scope>
</reference>
<reference key="5">
    <citation type="journal article" date="2007" name="Proc. Natl. Acad. Sci. U.S.A.">
        <title>Large-scale phosphorylation analysis of mouse liver.</title>
        <authorList>
            <person name="Villen J."/>
            <person name="Beausoleil S.A."/>
            <person name="Gerber S.A."/>
            <person name="Gygi S.P."/>
        </authorList>
    </citation>
    <scope>PHOSPHORYLATION [LARGE SCALE ANALYSIS] AT SER-19</scope>
    <scope>IDENTIFICATION BY MASS SPECTROMETRY [LARGE SCALE ANALYSIS]</scope>
    <source>
        <tissue>Liver</tissue>
    </source>
</reference>
<reference key="6">
    <citation type="journal article" date="2009" name="Immunity">
        <title>The phagosomal proteome in interferon-gamma-activated macrophages.</title>
        <authorList>
            <person name="Trost M."/>
            <person name="English L."/>
            <person name="Lemieux S."/>
            <person name="Courcelles M."/>
            <person name="Desjardins M."/>
            <person name="Thibault P."/>
        </authorList>
    </citation>
    <scope>PHOSPHORYLATION [LARGE SCALE ANALYSIS] AT SER-19</scope>
    <scope>IDENTIFICATION BY MASS SPECTROMETRY [LARGE SCALE ANALYSIS]</scope>
</reference>
<reference key="7">
    <citation type="journal article" date="2010" name="Cell">
        <title>A tissue-specific atlas of mouse protein phosphorylation and expression.</title>
        <authorList>
            <person name="Huttlin E.L."/>
            <person name="Jedrychowski M.P."/>
            <person name="Elias J.E."/>
            <person name="Goswami T."/>
            <person name="Rad R."/>
            <person name="Beausoleil S.A."/>
            <person name="Villen J."/>
            <person name="Haas W."/>
            <person name="Sowa M.E."/>
            <person name="Gygi S.P."/>
        </authorList>
    </citation>
    <scope>PHOSPHORYLATION [LARGE SCALE ANALYSIS] AT SER-19 AND SER-26</scope>
    <scope>IDENTIFICATION BY MASS SPECTROMETRY [LARGE SCALE ANALYSIS]</scope>
    <source>
        <tissue>Kidney</tissue>
        <tissue>Spleen</tissue>
    </source>
</reference>
<reference key="8">
    <citation type="journal article" date="2019" name="Int. J. Mol. Sci.">
        <title>Inducible Slc7a7 Knockout Mouse Model Recapitulates Lysinuric Protein Intolerance Disease.</title>
        <authorList>
            <person name="Bodoy S."/>
            <person name="Sotillo F."/>
            <person name="Espino-Guarch M."/>
            <person name="Sperandeo M.P."/>
            <person name="Ormazabal A."/>
            <person name="Zorzano A."/>
            <person name="Sebastio G."/>
            <person name="Artuch R."/>
            <person name="Palacin M."/>
        </authorList>
    </citation>
    <scope>DISRUPTION PHENOTYPE</scope>
</reference>
<gene>
    <name evidence="8" type="primary">Slc7a7</name>
</gene>
<evidence type="ECO:0000250" key="1">
    <source>
        <dbReference type="UniProtKB" id="Q9R0S5"/>
    </source>
</evidence>
<evidence type="ECO:0000250" key="2">
    <source>
        <dbReference type="UniProtKB" id="Q9UM01"/>
    </source>
</evidence>
<evidence type="ECO:0000255" key="3"/>
<evidence type="ECO:0000269" key="4">
    <source>
    </source>
</evidence>
<evidence type="ECO:0000269" key="5">
    <source>
    </source>
</evidence>
<evidence type="ECO:0000269" key="6">
    <source>
    </source>
</evidence>
<evidence type="ECO:0000305" key="7"/>
<evidence type="ECO:0000312" key="8">
    <source>
        <dbReference type="MGI" id="MGI:1337120"/>
    </source>
</evidence>
<evidence type="ECO:0007744" key="9">
    <source>
    </source>
</evidence>
<evidence type="ECO:0007744" key="10">
    <source>
    </source>
</evidence>
<evidence type="ECO:0007744" key="11">
    <source>
    </source>
</evidence>